<evidence type="ECO:0000269" key="1">
    <source>
    </source>
</evidence>
<evidence type="ECO:0000303" key="2">
    <source>
    </source>
</evidence>
<evidence type="ECO:0000303" key="3">
    <source>
    </source>
</evidence>
<evidence type="ECO:0000305" key="4"/>
<proteinExistence type="evidence at transcript level"/>
<dbReference type="EMBL" id="AY775400">
    <property type="protein sequence ID" value="AAV34143.1"/>
    <property type="molecule type" value="mRNA"/>
</dbReference>
<dbReference type="EMBL" id="AK005666">
    <property type="protein sequence ID" value="BAB24176.3"/>
    <property type="molecule type" value="mRNA"/>
</dbReference>
<dbReference type="EMBL" id="AK006063">
    <property type="protein sequence ID" value="BAB24391.1"/>
    <property type="molecule type" value="mRNA"/>
</dbReference>
<dbReference type="EMBL" id="AK014952">
    <property type="protein sequence ID" value="BAB29635.1"/>
    <property type="molecule type" value="mRNA"/>
</dbReference>
<dbReference type="EMBL" id="AK015365">
    <property type="protein sequence ID" value="BAB29814.1"/>
    <property type="molecule type" value="mRNA"/>
</dbReference>
<dbReference type="EMBL" id="AK029909">
    <property type="protein sequence ID" value="BAC26670.1"/>
    <property type="molecule type" value="mRNA"/>
</dbReference>
<dbReference type="EMBL" id="BC048444">
    <property type="protein sequence ID" value="AAH48444.1"/>
    <property type="status" value="ALT_SEQ"/>
    <property type="molecule type" value="mRNA"/>
</dbReference>
<dbReference type="EMBL" id="BC061072">
    <property type="protein sequence ID" value="AAH61072.1"/>
    <property type="molecule type" value="mRNA"/>
</dbReference>
<dbReference type="CCDS" id="CCDS26924.1">
    <molecule id="Q9CQ07-1"/>
</dbReference>
<dbReference type="CCDS" id="CCDS49440.1">
    <molecule id="Q9CQ07-2"/>
</dbReference>
<dbReference type="RefSeq" id="NP_001139493.1">
    <molecule id="Q9CQ07-2"/>
    <property type="nucleotide sequence ID" value="NM_001146021.1"/>
</dbReference>
<dbReference type="RefSeq" id="NP_080529.1">
    <molecule id="Q9CQ07-1"/>
    <property type="nucleotide sequence ID" value="NM_026253.4"/>
</dbReference>
<dbReference type="RefSeq" id="XP_006519520.1">
    <molecule id="Q9CQ07-1"/>
    <property type="nucleotide sequence ID" value="XM_006519457.4"/>
</dbReference>
<dbReference type="RefSeq" id="XP_006519521.1">
    <molecule id="Q9CQ07-1"/>
    <property type="nucleotide sequence ID" value="XM_006519458.4"/>
</dbReference>
<dbReference type="SMR" id="Q9CQ07"/>
<dbReference type="FunCoup" id="Q9CQ07">
    <property type="interactions" value="5"/>
</dbReference>
<dbReference type="STRING" id="10090.ENSMUSP00000041199"/>
<dbReference type="iPTMnet" id="Q9CQ07"/>
<dbReference type="PhosphoSitePlus" id="Q9CQ07"/>
<dbReference type="PaxDb" id="10090-ENSMUSP00000041199"/>
<dbReference type="ProteomicsDB" id="252665">
    <molecule id="Q9CQ07-1"/>
</dbReference>
<dbReference type="ProteomicsDB" id="252666">
    <molecule id="Q9CQ07-2"/>
</dbReference>
<dbReference type="Antibodypedia" id="49932">
    <property type="antibodies" value="93 antibodies from 19 providers"/>
</dbReference>
<dbReference type="DNASU" id="67580"/>
<dbReference type="Ensembl" id="ENSMUST00000038956.12">
    <molecule id="Q9CQ07-1"/>
    <property type="protein sequence ID" value="ENSMUSP00000041199.5"/>
    <property type="gene ID" value="ENSMUSG00000041673.13"/>
</dbReference>
<dbReference type="Ensembl" id="ENSMUST00000120866.8">
    <molecule id="Q9CQ07-2"/>
    <property type="protein sequence ID" value="ENSMUSP00000113608.2"/>
    <property type="gene ID" value="ENSMUSG00000041673.13"/>
</dbReference>
<dbReference type="GeneID" id="67580"/>
<dbReference type="KEGG" id="mmu:67580"/>
<dbReference type="UCSC" id="uc007szl.2">
    <molecule id="Q9CQ07-1"/>
    <property type="organism name" value="mouse"/>
</dbReference>
<dbReference type="AGR" id="MGI:1914830"/>
<dbReference type="CTD" id="474354"/>
<dbReference type="MGI" id="MGI:1914830">
    <property type="gene designation" value="Lrrc18"/>
</dbReference>
<dbReference type="VEuPathDB" id="HostDB:ENSMUSG00000041673"/>
<dbReference type="eggNOG" id="KOG0619">
    <property type="taxonomic scope" value="Eukaryota"/>
</dbReference>
<dbReference type="GeneTree" id="ENSGT00940000156026"/>
<dbReference type="HOGENOM" id="CLU_000288_18_15_1"/>
<dbReference type="InParanoid" id="Q9CQ07"/>
<dbReference type="OMA" id="DSQEDWR"/>
<dbReference type="OrthoDB" id="55273at9989"/>
<dbReference type="PhylomeDB" id="Q9CQ07"/>
<dbReference type="TreeFam" id="TF331129"/>
<dbReference type="BioGRID-ORCS" id="67580">
    <property type="hits" value="3 hits in 76 CRISPR screens"/>
</dbReference>
<dbReference type="PRO" id="PR:Q9CQ07"/>
<dbReference type="Proteomes" id="UP000000589">
    <property type="component" value="Chromosome 14"/>
</dbReference>
<dbReference type="RNAct" id="Q9CQ07">
    <property type="molecule type" value="protein"/>
</dbReference>
<dbReference type="Bgee" id="ENSMUSG00000041673">
    <property type="expression patterns" value="Expressed in seminiferous tubule of testis and 42 other cell types or tissues"/>
</dbReference>
<dbReference type="ExpressionAtlas" id="Q9CQ07">
    <property type="expression patterns" value="baseline and differential"/>
</dbReference>
<dbReference type="GO" id="GO:0005737">
    <property type="term" value="C:cytoplasm"/>
    <property type="evidence" value="ECO:0007669"/>
    <property type="project" value="UniProtKB-SubCell"/>
</dbReference>
<dbReference type="FunFam" id="3.80.10.10:FF:000246">
    <property type="entry name" value="Leucine rich repeat containing 18"/>
    <property type="match status" value="1"/>
</dbReference>
<dbReference type="Gene3D" id="3.80.10.10">
    <property type="entry name" value="Ribonuclease Inhibitor"/>
    <property type="match status" value="1"/>
</dbReference>
<dbReference type="InterPro" id="IPR001611">
    <property type="entry name" value="Leu-rich_rpt"/>
</dbReference>
<dbReference type="InterPro" id="IPR003591">
    <property type="entry name" value="Leu-rich_rpt_typical-subtyp"/>
</dbReference>
<dbReference type="InterPro" id="IPR032675">
    <property type="entry name" value="LRR_dom_sf"/>
</dbReference>
<dbReference type="InterPro" id="IPR050216">
    <property type="entry name" value="LRR_domain-containing"/>
</dbReference>
<dbReference type="InterPro" id="IPR055414">
    <property type="entry name" value="LRR_R13L4/SHOC2-like"/>
</dbReference>
<dbReference type="PANTHER" id="PTHR48051">
    <property type="match status" value="1"/>
</dbReference>
<dbReference type="PANTHER" id="PTHR48051:SF42">
    <property type="entry name" value="LEUCINE-RICH REPEAT-CONTAINING PROTEIN 18-LIKE"/>
    <property type="match status" value="1"/>
</dbReference>
<dbReference type="Pfam" id="PF23598">
    <property type="entry name" value="LRR_14"/>
    <property type="match status" value="1"/>
</dbReference>
<dbReference type="SMART" id="SM00369">
    <property type="entry name" value="LRR_TYP"/>
    <property type="match status" value="4"/>
</dbReference>
<dbReference type="SUPFAM" id="SSF52058">
    <property type="entry name" value="L domain-like"/>
    <property type="match status" value="1"/>
</dbReference>
<dbReference type="PROSITE" id="PS51450">
    <property type="entry name" value="LRR"/>
    <property type="match status" value="5"/>
</dbReference>
<reference key="1">
    <citation type="journal article" date="2005" name="Biochem. Biophys. Res. Commun.">
        <title>Identification of a novel testis-specific gene mtLR1, which is expressed at specific stages of mouse spermatogenesis.</title>
        <authorList>
            <person name="Nie D.-S."/>
            <person name="Xiang Y."/>
            <person name="Wang J."/>
            <person name="Deng Y."/>
            <person name="Tan X.-J."/>
            <person name="Liang Y.-H."/>
            <person name="Lu G.-X."/>
        </authorList>
    </citation>
    <scope>NUCLEOTIDE SEQUENCE [MRNA] (ISOFORM 1)</scope>
    <scope>TISSUE SPECIFICITY</scope>
    <scope>INDUCTION</scope>
    <scope>SUBCELLULAR LOCATION</scope>
</reference>
<reference key="2">
    <citation type="journal article" date="2005" name="Science">
        <title>The transcriptional landscape of the mammalian genome.</title>
        <authorList>
            <person name="Carninci P."/>
            <person name="Kasukawa T."/>
            <person name="Katayama S."/>
            <person name="Gough J."/>
            <person name="Frith M.C."/>
            <person name="Maeda N."/>
            <person name="Oyama R."/>
            <person name="Ravasi T."/>
            <person name="Lenhard B."/>
            <person name="Wells C."/>
            <person name="Kodzius R."/>
            <person name="Shimokawa K."/>
            <person name="Bajic V.B."/>
            <person name="Brenner S.E."/>
            <person name="Batalov S."/>
            <person name="Forrest A.R."/>
            <person name="Zavolan M."/>
            <person name="Davis M.J."/>
            <person name="Wilming L.G."/>
            <person name="Aidinis V."/>
            <person name="Allen J.E."/>
            <person name="Ambesi-Impiombato A."/>
            <person name="Apweiler R."/>
            <person name="Aturaliya R.N."/>
            <person name="Bailey T.L."/>
            <person name="Bansal M."/>
            <person name="Baxter L."/>
            <person name="Beisel K.W."/>
            <person name="Bersano T."/>
            <person name="Bono H."/>
            <person name="Chalk A.M."/>
            <person name="Chiu K.P."/>
            <person name="Choudhary V."/>
            <person name="Christoffels A."/>
            <person name="Clutterbuck D.R."/>
            <person name="Crowe M.L."/>
            <person name="Dalla E."/>
            <person name="Dalrymple B.P."/>
            <person name="de Bono B."/>
            <person name="Della Gatta G."/>
            <person name="di Bernardo D."/>
            <person name="Down T."/>
            <person name="Engstrom P."/>
            <person name="Fagiolini M."/>
            <person name="Faulkner G."/>
            <person name="Fletcher C.F."/>
            <person name="Fukushima T."/>
            <person name="Furuno M."/>
            <person name="Futaki S."/>
            <person name="Gariboldi M."/>
            <person name="Georgii-Hemming P."/>
            <person name="Gingeras T.R."/>
            <person name="Gojobori T."/>
            <person name="Green R.E."/>
            <person name="Gustincich S."/>
            <person name="Harbers M."/>
            <person name="Hayashi Y."/>
            <person name="Hensch T.K."/>
            <person name="Hirokawa N."/>
            <person name="Hill D."/>
            <person name="Huminiecki L."/>
            <person name="Iacono M."/>
            <person name="Ikeo K."/>
            <person name="Iwama A."/>
            <person name="Ishikawa T."/>
            <person name="Jakt M."/>
            <person name="Kanapin A."/>
            <person name="Katoh M."/>
            <person name="Kawasawa Y."/>
            <person name="Kelso J."/>
            <person name="Kitamura H."/>
            <person name="Kitano H."/>
            <person name="Kollias G."/>
            <person name="Krishnan S.P."/>
            <person name="Kruger A."/>
            <person name="Kummerfeld S.K."/>
            <person name="Kurochkin I.V."/>
            <person name="Lareau L.F."/>
            <person name="Lazarevic D."/>
            <person name="Lipovich L."/>
            <person name="Liu J."/>
            <person name="Liuni S."/>
            <person name="McWilliam S."/>
            <person name="Madan Babu M."/>
            <person name="Madera M."/>
            <person name="Marchionni L."/>
            <person name="Matsuda H."/>
            <person name="Matsuzawa S."/>
            <person name="Miki H."/>
            <person name="Mignone F."/>
            <person name="Miyake S."/>
            <person name="Morris K."/>
            <person name="Mottagui-Tabar S."/>
            <person name="Mulder N."/>
            <person name="Nakano N."/>
            <person name="Nakauchi H."/>
            <person name="Ng P."/>
            <person name="Nilsson R."/>
            <person name="Nishiguchi S."/>
            <person name="Nishikawa S."/>
            <person name="Nori F."/>
            <person name="Ohara O."/>
            <person name="Okazaki Y."/>
            <person name="Orlando V."/>
            <person name="Pang K.C."/>
            <person name="Pavan W.J."/>
            <person name="Pavesi G."/>
            <person name="Pesole G."/>
            <person name="Petrovsky N."/>
            <person name="Piazza S."/>
            <person name="Reed J."/>
            <person name="Reid J.F."/>
            <person name="Ring B.Z."/>
            <person name="Ringwald M."/>
            <person name="Rost B."/>
            <person name="Ruan Y."/>
            <person name="Salzberg S.L."/>
            <person name="Sandelin A."/>
            <person name="Schneider C."/>
            <person name="Schoenbach C."/>
            <person name="Sekiguchi K."/>
            <person name="Semple C.A."/>
            <person name="Seno S."/>
            <person name="Sessa L."/>
            <person name="Sheng Y."/>
            <person name="Shibata Y."/>
            <person name="Shimada H."/>
            <person name="Shimada K."/>
            <person name="Silva D."/>
            <person name="Sinclair B."/>
            <person name="Sperling S."/>
            <person name="Stupka E."/>
            <person name="Sugiura K."/>
            <person name="Sultana R."/>
            <person name="Takenaka Y."/>
            <person name="Taki K."/>
            <person name="Tammoja K."/>
            <person name="Tan S.L."/>
            <person name="Tang S."/>
            <person name="Taylor M.S."/>
            <person name="Tegner J."/>
            <person name="Teichmann S.A."/>
            <person name="Ueda H.R."/>
            <person name="van Nimwegen E."/>
            <person name="Verardo R."/>
            <person name="Wei C.L."/>
            <person name="Yagi K."/>
            <person name="Yamanishi H."/>
            <person name="Zabarovsky E."/>
            <person name="Zhu S."/>
            <person name="Zimmer A."/>
            <person name="Hide W."/>
            <person name="Bult C."/>
            <person name="Grimmond S.M."/>
            <person name="Teasdale R.D."/>
            <person name="Liu E.T."/>
            <person name="Brusic V."/>
            <person name="Quackenbush J."/>
            <person name="Wahlestedt C."/>
            <person name="Mattick J.S."/>
            <person name="Hume D.A."/>
            <person name="Kai C."/>
            <person name="Sasaki D."/>
            <person name="Tomaru Y."/>
            <person name="Fukuda S."/>
            <person name="Kanamori-Katayama M."/>
            <person name="Suzuki M."/>
            <person name="Aoki J."/>
            <person name="Arakawa T."/>
            <person name="Iida J."/>
            <person name="Imamura K."/>
            <person name="Itoh M."/>
            <person name="Kato T."/>
            <person name="Kawaji H."/>
            <person name="Kawagashira N."/>
            <person name="Kawashima T."/>
            <person name="Kojima M."/>
            <person name="Kondo S."/>
            <person name="Konno H."/>
            <person name="Nakano K."/>
            <person name="Ninomiya N."/>
            <person name="Nishio T."/>
            <person name="Okada M."/>
            <person name="Plessy C."/>
            <person name="Shibata K."/>
            <person name="Shiraki T."/>
            <person name="Suzuki S."/>
            <person name="Tagami M."/>
            <person name="Waki K."/>
            <person name="Watahiki A."/>
            <person name="Okamura-Oho Y."/>
            <person name="Suzuki H."/>
            <person name="Kawai J."/>
            <person name="Hayashizaki Y."/>
        </authorList>
    </citation>
    <scope>NUCLEOTIDE SEQUENCE [LARGE SCALE MRNA] (ISOFORMS 1 AND 2)</scope>
    <source>
        <strain>C57BL/6J</strain>
        <tissue>Testis</tissue>
    </source>
</reference>
<reference key="3">
    <citation type="journal article" date="2004" name="Genome Res.">
        <title>The status, quality, and expansion of the NIH full-length cDNA project: the Mammalian Gene Collection (MGC).</title>
        <authorList>
            <consortium name="The MGC Project Team"/>
        </authorList>
    </citation>
    <scope>NUCLEOTIDE SEQUENCE [LARGE SCALE MRNA] (ISOFORM 2)</scope>
    <source>
        <tissue>Testis</tissue>
    </source>
</reference>
<name>LRC18_MOUSE</name>
<organism>
    <name type="scientific">Mus musculus</name>
    <name type="common">Mouse</name>
    <dbReference type="NCBI Taxonomy" id="10090"/>
    <lineage>
        <taxon>Eukaryota</taxon>
        <taxon>Metazoa</taxon>
        <taxon>Chordata</taxon>
        <taxon>Craniata</taxon>
        <taxon>Vertebrata</taxon>
        <taxon>Euteleostomi</taxon>
        <taxon>Mammalia</taxon>
        <taxon>Eutheria</taxon>
        <taxon>Euarchontoglires</taxon>
        <taxon>Glires</taxon>
        <taxon>Rodentia</taxon>
        <taxon>Myomorpha</taxon>
        <taxon>Muroidea</taxon>
        <taxon>Muridae</taxon>
        <taxon>Murinae</taxon>
        <taxon>Mus</taxon>
        <taxon>Mus</taxon>
    </lineage>
</organism>
<comment type="function">
    <text>May be involved in the regulation of spermatogenesis and sperm maturation.</text>
</comment>
<comment type="subcellular location">
    <subcellularLocation>
        <location evidence="1">Cytoplasm</location>
    </subcellularLocation>
</comment>
<comment type="alternative products">
    <event type="alternative splicing"/>
    <isoform>
        <id>Q9CQ07-1</id>
        <name>1</name>
        <sequence type="displayed"/>
    </isoform>
    <isoform>
        <id>Q9CQ07-2</id>
        <name>2</name>
        <sequence type="described" ref="VSP_015741"/>
    </isoform>
</comment>
<comment type="tissue specificity">
    <text evidence="1">Exclusively expressed in spermatocytes and roud spermatids within seminiferous tubules during spermatogenesis.</text>
</comment>
<comment type="induction">
    <text evidence="1">Up-regulated during sexual maturation and dowm-regulated by experimental cryptorchidism and heat stress.</text>
</comment>
<comment type="sequence caution" evidence="4">
    <conflict type="miscellaneous discrepancy">
        <sequence resource="EMBL-CDS" id="AAH48444"/>
    </conflict>
    <text>Contaminating sequence. Potential poly-A sequence.</text>
</comment>
<keyword id="KW-0025">Alternative splicing</keyword>
<keyword id="KW-0963">Cytoplasm</keyword>
<keyword id="KW-0433">Leucine-rich repeat</keyword>
<keyword id="KW-1185">Reference proteome</keyword>
<keyword id="KW-0677">Repeat</keyword>
<accession>Q9CQ07</accession>
<accession>Q6P8T8</accession>
<accession>Q80ZT3</accession>
<accession>Q9CW01</accession>
<accession>Q9DA89</accession>
<feature type="chain" id="PRO_0000084473" description="Leucine-rich repeat-containing protein 18">
    <location>
        <begin position="1"/>
        <end position="262"/>
    </location>
</feature>
<feature type="repeat" description="LRR 1">
    <location>
        <begin position="28"/>
        <end position="49"/>
    </location>
</feature>
<feature type="repeat" description="LRR 2">
    <location>
        <begin position="51"/>
        <end position="72"/>
    </location>
</feature>
<feature type="repeat" description="LRR 3">
    <location>
        <begin position="74"/>
        <end position="95"/>
    </location>
</feature>
<feature type="repeat" description="LRR 4">
    <location>
        <begin position="97"/>
        <end position="118"/>
    </location>
</feature>
<feature type="repeat" description="LRR 5">
    <location>
        <begin position="122"/>
        <end position="144"/>
    </location>
</feature>
<feature type="repeat" description="LRR 6">
    <location>
        <begin position="145"/>
        <end position="167"/>
    </location>
</feature>
<feature type="repeat" description="LRR 7">
    <location>
        <begin position="168"/>
        <end position="189"/>
    </location>
</feature>
<feature type="splice variant" id="VSP_015741" description="In isoform 2." evidence="2 3">
    <location>
        <begin position="256"/>
        <end position="262"/>
    </location>
</feature>
<feature type="sequence conflict" description="In Ref. 2; BAB24391." evidence="4" ref="2">
    <original>L</original>
    <variation>H</variation>
    <location>
        <position position="32"/>
    </location>
</feature>
<feature type="sequence conflict" description="In Ref. 3; AAH48444." evidence="4" ref="3">
    <original>K</original>
    <variation>M</variation>
    <location>
        <position position="87"/>
    </location>
</feature>
<protein>
    <recommendedName>
        <fullName>Leucine-rich repeat-containing protein 18</fullName>
    </recommendedName>
    <alternativeName>
        <fullName>Testis-specific LRR protein</fullName>
    </alternativeName>
</protein>
<gene>
    <name type="primary">Lrrc18</name>
    <name type="synonym">Mtlr1</name>
</gene>
<sequence>MAKGGKGPKGKKITLNVAKNCIKITFDGRKRLDLSKMGITTFPKCILRLSDIDELDLSRNMIRKIPDSIAKFQNLRWLDLHSNYIDKLPESIGQMTSLLFLNVSNNRLTTNGLPVELNQLKNIRTVNLGLNHLDSVPTTLGALKELHEVGLHDNLLTTIPASIAKLPKLKKLNIKRNPFPNADESEMFVDSIKRLENLYLVEEKDMCSSCLQRCQQARDKLNKIKSMAPSAPRKALFSNLVSPNSTAKDAQEEWRLRSPSTF</sequence>